<sequence>MSIEVRNVSKNFNAFKALNNISLDIQSGELVALLGPSGCGKTTLLRIIAGLETPDDGSIVFHGEDVSGHDVRDRNVGFVFQHYALFRHMTVFDNVAFGLRMKPKSERPNETRIAEKVHELLNMVQLDWLADRYPEQLSGGQRQRIALARALAVEPKVLLLDEPFGALDAKVRKELRRWLARLHEDINLTSVFVTHDQEEAMEVADRIVVMNKGVIEQIGSPGEVYENPSNDFVYHFLGDSNRLSLGDEGHVLFRPHEVSLSRQEIEDHHAAEVRDIRPLGATTRVTLKVEGQNELIEAEVVKDHDSLVGLAKGETLFFKPKVWQKL</sequence>
<accession>Q88AS5</accession>
<reference key="1">
    <citation type="journal article" date="2003" name="Proc. Natl. Acad. Sci. U.S.A.">
        <title>The complete genome sequence of the Arabidopsis and tomato pathogen Pseudomonas syringae pv. tomato DC3000.</title>
        <authorList>
            <person name="Buell C.R."/>
            <person name="Joardar V."/>
            <person name="Lindeberg M."/>
            <person name="Selengut J."/>
            <person name="Paulsen I.T."/>
            <person name="Gwinn M.L."/>
            <person name="Dodson R.J."/>
            <person name="DeBoy R.T."/>
            <person name="Durkin A.S."/>
            <person name="Kolonay J.F."/>
            <person name="Madupu R."/>
            <person name="Daugherty S.C."/>
            <person name="Brinkac L.M."/>
            <person name="Beanan M.J."/>
            <person name="Haft D.H."/>
            <person name="Nelson W.C."/>
            <person name="Davidsen T.M."/>
            <person name="Zafar N."/>
            <person name="Zhou L."/>
            <person name="Liu J."/>
            <person name="Yuan Q."/>
            <person name="Khouri H.M."/>
            <person name="Fedorova N.B."/>
            <person name="Tran B."/>
            <person name="Russell D."/>
            <person name="Berry K.J."/>
            <person name="Utterback T.R."/>
            <person name="Van Aken S.E."/>
            <person name="Feldblyum T.V."/>
            <person name="D'Ascenzo M."/>
            <person name="Deng W.-L."/>
            <person name="Ramos A.R."/>
            <person name="Alfano J.R."/>
            <person name="Cartinhour S."/>
            <person name="Chatterjee A.K."/>
            <person name="Delaney T.P."/>
            <person name="Lazarowitz S.G."/>
            <person name="Martin G.B."/>
            <person name="Schneider D.J."/>
            <person name="Tang X."/>
            <person name="Bender C.L."/>
            <person name="White O."/>
            <person name="Fraser C.M."/>
            <person name="Collmer A."/>
        </authorList>
    </citation>
    <scope>NUCLEOTIDE SEQUENCE [LARGE SCALE GENOMIC DNA]</scope>
    <source>
        <strain>ATCC BAA-871 / DC3000</strain>
    </source>
</reference>
<organism>
    <name type="scientific">Pseudomonas syringae pv. tomato (strain ATCC BAA-871 / DC3000)</name>
    <dbReference type="NCBI Taxonomy" id="223283"/>
    <lineage>
        <taxon>Bacteria</taxon>
        <taxon>Pseudomonadati</taxon>
        <taxon>Pseudomonadota</taxon>
        <taxon>Gammaproteobacteria</taxon>
        <taxon>Pseudomonadales</taxon>
        <taxon>Pseudomonadaceae</taxon>
        <taxon>Pseudomonas</taxon>
    </lineage>
</organism>
<keyword id="KW-0067">ATP-binding</keyword>
<keyword id="KW-0997">Cell inner membrane</keyword>
<keyword id="KW-1003">Cell membrane</keyword>
<keyword id="KW-0472">Membrane</keyword>
<keyword id="KW-0547">Nucleotide-binding</keyword>
<keyword id="KW-1185">Reference proteome</keyword>
<keyword id="KW-0764">Sulfate transport</keyword>
<keyword id="KW-1278">Translocase</keyword>
<keyword id="KW-0813">Transport</keyword>
<comment type="function">
    <text evidence="1">Part of the ABC transporter complex CysAWTP involved in sulfate/thiosulfate import. Responsible for energy coupling to the transport system.</text>
</comment>
<comment type="catalytic activity">
    <reaction evidence="1">
        <text>sulfate(out) + ATP + H2O = sulfate(in) + ADP + phosphate + H(+)</text>
        <dbReference type="Rhea" id="RHEA:10192"/>
        <dbReference type="ChEBI" id="CHEBI:15377"/>
        <dbReference type="ChEBI" id="CHEBI:15378"/>
        <dbReference type="ChEBI" id="CHEBI:16189"/>
        <dbReference type="ChEBI" id="CHEBI:30616"/>
        <dbReference type="ChEBI" id="CHEBI:43474"/>
        <dbReference type="ChEBI" id="CHEBI:456216"/>
        <dbReference type="EC" id="7.3.2.3"/>
    </reaction>
</comment>
<comment type="catalytic activity">
    <reaction evidence="1">
        <text>thiosulfate(out) + ATP + H2O = thiosulfate(in) + ADP + phosphate + H(+)</text>
        <dbReference type="Rhea" id="RHEA:29871"/>
        <dbReference type="ChEBI" id="CHEBI:15377"/>
        <dbReference type="ChEBI" id="CHEBI:15378"/>
        <dbReference type="ChEBI" id="CHEBI:30616"/>
        <dbReference type="ChEBI" id="CHEBI:33542"/>
        <dbReference type="ChEBI" id="CHEBI:43474"/>
        <dbReference type="ChEBI" id="CHEBI:456216"/>
        <dbReference type="EC" id="7.3.2.3"/>
    </reaction>
</comment>
<comment type="subunit">
    <text evidence="1">The complex is composed of two ATP-binding proteins (CysA), two transmembrane proteins (CysT and CysW) and a solute-binding protein (CysP).</text>
</comment>
<comment type="subcellular location">
    <subcellularLocation>
        <location evidence="1">Cell inner membrane</location>
        <topology evidence="1">Peripheral membrane protein</topology>
    </subcellularLocation>
</comment>
<comment type="similarity">
    <text evidence="1">Belongs to the ABC transporter superfamily. Sulfate/tungstate importer (TC 3.A.1.6) family.</text>
</comment>
<proteinExistence type="inferred from homology"/>
<dbReference type="EC" id="7.3.2.3" evidence="1"/>
<dbReference type="EMBL" id="AE016853">
    <property type="protein sequence ID" value="AAO53856.1"/>
    <property type="molecule type" value="Genomic_DNA"/>
</dbReference>
<dbReference type="RefSeq" id="NP_790161.1">
    <property type="nucleotide sequence ID" value="NC_004578.1"/>
</dbReference>
<dbReference type="RefSeq" id="WP_003380252.1">
    <property type="nucleotide sequence ID" value="NC_004578.1"/>
</dbReference>
<dbReference type="SMR" id="Q88AS5"/>
<dbReference type="STRING" id="223283.PSPTO_0311"/>
<dbReference type="GeneID" id="1181920"/>
<dbReference type="KEGG" id="pst:PSPTO_0311"/>
<dbReference type="PATRIC" id="fig|223283.9.peg.323"/>
<dbReference type="eggNOG" id="COG1118">
    <property type="taxonomic scope" value="Bacteria"/>
</dbReference>
<dbReference type="HOGENOM" id="CLU_000604_1_1_6"/>
<dbReference type="OrthoDB" id="9802264at2"/>
<dbReference type="PhylomeDB" id="Q88AS5"/>
<dbReference type="Proteomes" id="UP000002515">
    <property type="component" value="Chromosome"/>
</dbReference>
<dbReference type="GO" id="GO:0043190">
    <property type="term" value="C:ATP-binding cassette (ABC) transporter complex"/>
    <property type="evidence" value="ECO:0007669"/>
    <property type="project" value="InterPro"/>
</dbReference>
<dbReference type="GO" id="GO:0015419">
    <property type="term" value="F:ABC-type sulfate transporter activity"/>
    <property type="evidence" value="ECO:0007669"/>
    <property type="project" value="InterPro"/>
</dbReference>
<dbReference type="GO" id="GO:0102025">
    <property type="term" value="F:ABC-type thiosulfate transporter activity"/>
    <property type="evidence" value="ECO:0007669"/>
    <property type="project" value="RHEA"/>
</dbReference>
<dbReference type="GO" id="GO:0005524">
    <property type="term" value="F:ATP binding"/>
    <property type="evidence" value="ECO:0007669"/>
    <property type="project" value="UniProtKB-KW"/>
</dbReference>
<dbReference type="GO" id="GO:0016887">
    <property type="term" value="F:ATP hydrolysis activity"/>
    <property type="evidence" value="ECO:0007669"/>
    <property type="project" value="InterPro"/>
</dbReference>
<dbReference type="CDD" id="cd03296">
    <property type="entry name" value="ABC_CysA_sulfate_importer"/>
    <property type="match status" value="1"/>
</dbReference>
<dbReference type="FunFam" id="3.40.50.300:FF:000227">
    <property type="entry name" value="Sulfate/thiosulfate import ATP-binding protein CysA"/>
    <property type="match status" value="1"/>
</dbReference>
<dbReference type="Gene3D" id="3.40.50.300">
    <property type="entry name" value="P-loop containing nucleotide triphosphate hydrolases"/>
    <property type="match status" value="1"/>
</dbReference>
<dbReference type="InterPro" id="IPR003593">
    <property type="entry name" value="AAA+_ATPase"/>
</dbReference>
<dbReference type="InterPro" id="IPR050093">
    <property type="entry name" value="ABC_SmlMolc_Importer"/>
</dbReference>
<dbReference type="InterPro" id="IPR003439">
    <property type="entry name" value="ABC_transporter-like_ATP-bd"/>
</dbReference>
<dbReference type="InterPro" id="IPR017871">
    <property type="entry name" value="ABC_transporter-like_CS"/>
</dbReference>
<dbReference type="InterPro" id="IPR008995">
    <property type="entry name" value="Mo/tungstate-bd_C_term_dom"/>
</dbReference>
<dbReference type="InterPro" id="IPR027417">
    <property type="entry name" value="P-loop_NTPase"/>
</dbReference>
<dbReference type="InterPro" id="IPR005666">
    <property type="entry name" value="Sulph_transpt1"/>
</dbReference>
<dbReference type="InterPro" id="IPR024765">
    <property type="entry name" value="TOBE-like"/>
</dbReference>
<dbReference type="NCBIfam" id="TIGR00968">
    <property type="entry name" value="3a0106s01"/>
    <property type="match status" value="1"/>
</dbReference>
<dbReference type="PANTHER" id="PTHR42781">
    <property type="entry name" value="SPERMIDINE/PUTRESCINE IMPORT ATP-BINDING PROTEIN POTA"/>
    <property type="match status" value="1"/>
</dbReference>
<dbReference type="PANTHER" id="PTHR42781:SF4">
    <property type="entry name" value="SPERMIDINE_PUTRESCINE IMPORT ATP-BINDING PROTEIN POTA"/>
    <property type="match status" value="1"/>
</dbReference>
<dbReference type="Pfam" id="PF00005">
    <property type="entry name" value="ABC_tran"/>
    <property type="match status" value="1"/>
</dbReference>
<dbReference type="Pfam" id="PF12857">
    <property type="entry name" value="TOBE_3"/>
    <property type="match status" value="1"/>
</dbReference>
<dbReference type="SMART" id="SM00382">
    <property type="entry name" value="AAA"/>
    <property type="match status" value="1"/>
</dbReference>
<dbReference type="SUPFAM" id="SSF50331">
    <property type="entry name" value="MOP-like"/>
    <property type="match status" value="1"/>
</dbReference>
<dbReference type="SUPFAM" id="SSF52540">
    <property type="entry name" value="P-loop containing nucleoside triphosphate hydrolases"/>
    <property type="match status" value="1"/>
</dbReference>
<dbReference type="PROSITE" id="PS00211">
    <property type="entry name" value="ABC_TRANSPORTER_1"/>
    <property type="match status" value="1"/>
</dbReference>
<dbReference type="PROSITE" id="PS50893">
    <property type="entry name" value="ABC_TRANSPORTER_2"/>
    <property type="match status" value="1"/>
</dbReference>
<dbReference type="PROSITE" id="PS51237">
    <property type="entry name" value="CYSA"/>
    <property type="match status" value="1"/>
</dbReference>
<name>CYSA_PSESM</name>
<protein>
    <recommendedName>
        <fullName evidence="1">Sulfate/thiosulfate import ATP-binding protein CysA</fullName>
        <ecNumber evidence="1">7.3.2.3</ecNumber>
    </recommendedName>
    <alternativeName>
        <fullName evidence="1">Sulfate-transporting ATPase</fullName>
    </alternativeName>
</protein>
<evidence type="ECO:0000255" key="1">
    <source>
        <dbReference type="HAMAP-Rule" id="MF_01701"/>
    </source>
</evidence>
<feature type="chain" id="PRO_0000092284" description="Sulfate/thiosulfate import ATP-binding protein CysA">
    <location>
        <begin position="1"/>
        <end position="326"/>
    </location>
</feature>
<feature type="domain" description="ABC transporter" evidence="1">
    <location>
        <begin position="3"/>
        <end position="237"/>
    </location>
</feature>
<feature type="binding site" evidence="1">
    <location>
        <begin position="35"/>
        <end position="42"/>
    </location>
    <ligand>
        <name>ATP</name>
        <dbReference type="ChEBI" id="CHEBI:30616"/>
    </ligand>
</feature>
<gene>
    <name evidence="1" type="primary">cysA</name>
    <name type="ordered locus">PSPTO_0311</name>
</gene>